<reference key="1">
    <citation type="submission" date="2004-11" db="EMBL/GenBank/DDBJ databases">
        <authorList>
            <consortium name="The German cDNA consortium"/>
        </authorList>
    </citation>
    <scope>NUCLEOTIDE SEQUENCE [LARGE SCALE MRNA]</scope>
    <source>
        <tissue>Kidney</tissue>
    </source>
</reference>
<gene>
    <name type="primary">ARL3</name>
</gene>
<dbReference type="EMBL" id="CR858213">
    <property type="protein sequence ID" value="CAH90451.1"/>
    <property type="molecule type" value="mRNA"/>
</dbReference>
<dbReference type="RefSeq" id="NP_001125231.1">
    <property type="nucleotide sequence ID" value="NM_001131759.1"/>
</dbReference>
<dbReference type="SMR" id="Q5RCQ6"/>
<dbReference type="STRING" id="9601.ENSPPYP00000003033"/>
<dbReference type="GeneID" id="100172124"/>
<dbReference type="KEGG" id="pon:100172124"/>
<dbReference type="CTD" id="403"/>
<dbReference type="eggNOG" id="KOG0074">
    <property type="taxonomic scope" value="Eukaryota"/>
</dbReference>
<dbReference type="HOGENOM" id="CLU_040729_12_0_1"/>
<dbReference type="InParanoid" id="Q5RCQ6"/>
<dbReference type="OrthoDB" id="2011769at2759"/>
<dbReference type="Proteomes" id="UP000001595">
    <property type="component" value="Unplaced"/>
</dbReference>
<dbReference type="GO" id="GO:0005813">
    <property type="term" value="C:centrosome"/>
    <property type="evidence" value="ECO:0000250"/>
    <property type="project" value="UniProtKB"/>
</dbReference>
<dbReference type="GO" id="GO:0005929">
    <property type="term" value="C:cilium"/>
    <property type="evidence" value="ECO:0000250"/>
    <property type="project" value="UniProtKB"/>
</dbReference>
<dbReference type="GO" id="GO:0005881">
    <property type="term" value="C:cytoplasmic microtubule"/>
    <property type="evidence" value="ECO:0000250"/>
    <property type="project" value="UniProtKB"/>
</dbReference>
<dbReference type="GO" id="GO:0005794">
    <property type="term" value="C:Golgi apparatus"/>
    <property type="evidence" value="ECO:0000250"/>
    <property type="project" value="UniProtKB"/>
</dbReference>
<dbReference type="GO" id="GO:0000139">
    <property type="term" value="C:Golgi membrane"/>
    <property type="evidence" value="ECO:0007669"/>
    <property type="project" value="UniProtKB-SubCell"/>
</dbReference>
<dbReference type="GO" id="GO:0030496">
    <property type="term" value="C:midbody"/>
    <property type="evidence" value="ECO:0000250"/>
    <property type="project" value="UniProtKB"/>
</dbReference>
<dbReference type="GO" id="GO:0005634">
    <property type="term" value="C:nucleus"/>
    <property type="evidence" value="ECO:0000250"/>
    <property type="project" value="UniProtKB"/>
</dbReference>
<dbReference type="GO" id="GO:0032391">
    <property type="term" value="C:photoreceptor connecting cilium"/>
    <property type="evidence" value="ECO:0000250"/>
    <property type="project" value="UniProtKB"/>
</dbReference>
<dbReference type="GO" id="GO:0005876">
    <property type="term" value="C:spindle microtubule"/>
    <property type="evidence" value="ECO:0000250"/>
    <property type="project" value="UniProtKB"/>
</dbReference>
<dbReference type="GO" id="GO:0019003">
    <property type="term" value="F:GDP binding"/>
    <property type="evidence" value="ECO:0000250"/>
    <property type="project" value="UniProtKB"/>
</dbReference>
<dbReference type="GO" id="GO:0005525">
    <property type="term" value="F:GTP binding"/>
    <property type="evidence" value="ECO:0000250"/>
    <property type="project" value="UniProtKB"/>
</dbReference>
<dbReference type="GO" id="GO:0003924">
    <property type="term" value="F:GTPase activity"/>
    <property type="evidence" value="ECO:0000250"/>
    <property type="project" value="UniProtKB"/>
</dbReference>
<dbReference type="GO" id="GO:0008017">
    <property type="term" value="F:microtubule binding"/>
    <property type="evidence" value="ECO:0000250"/>
    <property type="project" value="UniProtKB"/>
</dbReference>
<dbReference type="GO" id="GO:0060271">
    <property type="term" value="P:cilium assembly"/>
    <property type="evidence" value="ECO:0000250"/>
    <property type="project" value="UniProtKB"/>
</dbReference>
<dbReference type="GO" id="GO:0006893">
    <property type="term" value="P:Golgi to plasma membrane transport"/>
    <property type="evidence" value="ECO:0000250"/>
    <property type="project" value="UniProtKB"/>
</dbReference>
<dbReference type="GO" id="GO:0001822">
    <property type="term" value="P:kidney development"/>
    <property type="evidence" value="ECO:0000250"/>
    <property type="project" value="UniProtKB"/>
</dbReference>
<dbReference type="GO" id="GO:0000281">
    <property type="term" value="P:mitotic cytokinesis"/>
    <property type="evidence" value="ECO:0000250"/>
    <property type="project" value="UniProtKB"/>
</dbReference>
<dbReference type="GO" id="GO:0042461">
    <property type="term" value="P:photoreceptor cell development"/>
    <property type="evidence" value="ECO:0000250"/>
    <property type="project" value="UniProtKB"/>
</dbReference>
<dbReference type="GO" id="GO:1903441">
    <property type="term" value="P:protein localization to ciliary membrane"/>
    <property type="evidence" value="ECO:0000250"/>
    <property type="project" value="UniProtKB"/>
</dbReference>
<dbReference type="GO" id="GO:0015031">
    <property type="term" value="P:protein transport"/>
    <property type="evidence" value="ECO:0007669"/>
    <property type="project" value="UniProtKB-KW"/>
</dbReference>
<dbReference type="GO" id="GO:0007264">
    <property type="term" value="P:small GTPase-mediated signal transduction"/>
    <property type="evidence" value="ECO:0000250"/>
    <property type="project" value="UniProtKB"/>
</dbReference>
<dbReference type="CDD" id="cd04155">
    <property type="entry name" value="Arl3"/>
    <property type="match status" value="1"/>
</dbReference>
<dbReference type="FunFam" id="3.40.50.300:FF:002426">
    <property type="entry name" value="ADP-ribosylation factor-like 3"/>
    <property type="match status" value="1"/>
</dbReference>
<dbReference type="Gene3D" id="3.40.50.300">
    <property type="entry name" value="P-loop containing nucleotide triphosphate hydrolases"/>
    <property type="match status" value="2"/>
</dbReference>
<dbReference type="InterPro" id="IPR044612">
    <property type="entry name" value="ARL2/3"/>
</dbReference>
<dbReference type="InterPro" id="IPR027417">
    <property type="entry name" value="P-loop_NTPase"/>
</dbReference>
<dbReference type="InterPro" id="IPR005225">
    <property type="entry name" value="Small_GTP-bd"/>
</dbReference>
<dbReference type="InterPro" id="IPR006689">
    <property type="entry name" value="Small_GTPase_ARF/SAR"/>
</dbReference>
<dbReference type="NCBIfam" id="TIGR00231">
    <property type="entry name" value="small_GTP"/>
    <property type="match status" value="1"/>
</dbReference>
<dbReference type="PANTHER" id="PTHR45697">
    <property type="entry name" value="ADP-RIBOSYLATION FACTOR-LIKE PROTEIN 2-RELATED"/>
    <property type="match status" value="1"/>
</dbReference>
<dbReference type="Pfam" id="PF00025">
    <property type="entry name" value="Arf"/>
    <property type="match status" value="1"/>
</dbReference>
<dbReference type="PRINTS" id="PR00328">
    <property type="entry name" value="SAR1GTPBP"/>
</dbReference>
<dbReference type="SMART" id="SM00177">
    <property type="entry name" value="ARF"/>
    <property type="match status" value="1"/>
</dbReference>
<dbReference type="SMART" id="SM00178">
    <property type="entry name" value="SAR"/>
    <property type="match status" value="1"/>
</dbReference>
<dbReference type="SUPFAM" id="SSF52540">
    <property type="entry name" value="P-loop containing nucleoside triphosphate hydrolases"/>
    <property type="match status" value="1"/>
</dbReference>
<dbReference type="PROSITE" id="PS51417">
    <property type="entry name" value="ARF"/>
    <property type="match status" value="1"/>
</dbReference>
<evidence type="ECO:0000250" key="1"/>
<evidence type="ECO:0000250" key="2">
    <source>
        <dbReference type="UniProtKB" id="P36405"/>
    </source>
</evidence>
<evidence type="ECO:0000250" key="3">
    <source>
        <dbReference type="UniProtKB" id="Q9WUL7"/>
    </source>
</evidence>
<evidence type="ECO:0000255" key="4"/>
<evidence type="ECO:0000305" key="5"/>
<keyword id="KW-0131">Cell cycle</keyword>
<keyword id="KW-0132">Cell division</keyword>
<keyword id="KW-0966">Cell projection</keyword>
<keyword id="KW-0963">Cytoplasm</keyword>
<keyword id="KW-0206">Cytoskeleton</keyword>
<keyword id="KW-0333">Golgi apparatus</keyword>
<keyword id="KW-0342">GTP-binding</keyword>
<keyword id="KW-0449">Lipoprotein</keyword>
<keyword id="KW-0472">Membrane</keyword>
<keyword id="KW-0519">Myristate</keyword>
<keyword id="KW-0547">Nucleotide-binding</keyword>
<keyword id="KW-0539">Nucleus</keyword>
<keyword id="KW-0597">Phosphoprotein</keyword>
<keyword id="KW-0653">Protein transport</keyword>
<keyword id="KW-1185">Reference proteome</keyword>
<keyword id="KW-0813">Transport</keyword>
<comment type="function">
    <text evidence="2 3">Small GTP-binding protein which cycles between an inactive GDP-bound and an active GTP-bound form, and the rate of cycling is regulated by guanine nucleotide exchange factors (GEF) and GTPase-activating proteins (GAP). Required for normal cytokinesis and cilia signaling. Requires assistance from GTPase-activating proteins (GAPs) like RP2 and PDE6D, in order to cycle between inactive GDP-bound and active GTP-bound forms. Required for targeting proteins to the cilium, including myristoylated NPHP3 and prenylated INPP5E. Targets NPHP3 to the ciliary membrane by releasing myristoylated NPHP3 from UNC119B cargo adapter into the cilium (By similarity). Required for PKD1:PKD2 complex targeting from the trans-Golgi network to the cilium (By similarity).</text>
</comment>
<comment type="subunit">
    <text evidence="2 3">Found in a complex with ARL3, RP2 and UNC119 (or UNC119B); RP2 induces hydrolysis of GTP ARL3 in the complex, leading to the release of UNC119 (or UNC119B). Interacts with RP2; interaction is direct and stimulated with the activated GTP-bound form of ARL3. Interacts with SYS1. Interacts with ARL2BP; the GTP-bound form interacts with ARL2BP. Microtubule-associated protein. Does not interact with TBCC (By similarity). Interacts with RP2. Interacts with PDE6D; the interaction occurs specifically with the GTP-bound form of ARL3. Interacts with GGA1; the interaction recruits PKD1:PKD2 complex to trans-Golgi network and is required for ciliary targeting of PKD1:PKD2 complex (By similarity). Interacts with DNAAF9 (By similarity).</text>
</comment>
<comment type="subcellular location">
    <subcellularLocation>
        <location evidence="1">Golgi apparatus membrane</location>
        <topology evidence="1">Peripheral membrane protein</topology>
        <orientation evidence="1">Cytoplasmic side</orientation>
    </subcellularLocation>
    <subcellularLocation>
        <location evidence="1">Cytoplasm</location>
        <location evidence="1">Cytoskeleton</location>
        <location evidence="1">Spindle</location>
    </subcellularLocation>
    <subcellularLocation>
        <location evidence="1">Nucleus</location>
    </subcellularLocation>
    <subcellularLocation>
        <location evidence="1">Cytoplasm</location>
        <location evidence="1">Cytoskeleton</location>
        <location evidence="1">Microtubule organizing center</location>
        <location evidence="1">Centrosome</location>
    </subcellularLocation>
    <subcellularLocation>
        <location evidence="1">Cytoplasm</location>
    </subcellularLocation>
    <subcellularLocation>
        <location evidence="2">Cell projection</location>
        <location evidence="2">Cilium</location>
    </subcellularLocation>
    <text evidence="1">Detected predominantly in the photoreceptor connecting cilium. Centrosome-associated throughout the cell cycle. Not detected to interphase microtubules. Present on the mitotic spindle (By similarity).</text>
</comment>
<comment type="similarity">
    <text evidence="5">Belongs to the small GTPase superfamily. Arf family.</text>
</comment>
<proteinExistence type="evidence at transcript level"/>
<protein>
    <recommendedName>
        <fullName>ADP-ribosylation factor-like protein 3</fullName>
    </recommendedName>
</protein>
<sequence>MGLLSILRKLKSAPDQEVRILLLGLDNAGKTTLLKQLASEDISHITPTQGFNIKSVQSQGFKLNVWDIGGQRKIRPYWKNYFENTDILELAELLEEEKLSCVPVLIFANKQDLLTAAPASEIAEGLNLHTIRDRVWQIQSCSALTGEGVQDGMNWVCKNVNAKKK</sequence>
<feature type="initiator methionine" description="Removed" evidence="4">
    <location>
        <position position="1"/>
    </location>
</feature>
<feature type="chain" id="PRO_0000356298" description="ADP-ribosylation factor-like protein 3">
    <location>
        <begin position="2"/>
        <end position="165"/>
    </location>
</feature>
<feature type="binding site" evidence="1">
    <location>
        <begin position="24"/>
        <end position="31"/>
    </location>
    <ligand>
        <name>GTP</name>
        <dbReference type="ChEBI" id="CHEBI:37565"/>
    </ligand>
</feature>
<feature type="binding site" evidence="1">
    <location>
        <begin position="67"/>
        <end position="71"/>
    </location>
    <ligand>
        <name>GTP</name>
        <dbReference type="ChEBI" id="CHEBI:37565"/>
    </ligand>
</feature>
<feature type="binding site" evidence="1">
    <location>
        <begin position="109"/>
        <end position="112"/>
    </location>
    <ligand>
        <name>GTP</name>
        <dbReference type="ChEBI" id="CHEBI:37565"/>
    </ligand>
</feature>
<feature type="modified residue" description="Phosphoserine" evidence="2">
    <location>
        <position position="5"/>
    </location>
</feature>
<feature type="lipid moiety-binding region" description="N-myristoyl glycine" evidence="4">
    <location>
        <position position="2"/>
    </location>
</feature>
<accession>Q5RCQ6</accession>
<organism>
    <name type="scientific">Pongo abelii</name>
    <name type="common">Sumatran orangutan</name>
    <name type="synonym">Pongo pygmaeus abelii</name>
    <dbReference type="NCBI Taxonomy" id="9601"/>
    <lineage>
        <taxon>Eukaryota</taxon>
        <taxon>Metazoa</taxon>
        <taxon>Chordata</taxon>
        <taxon>Craniata</taxon>
        <taxon>Vertebrata</taxon>
        <taxon>Euteleostomi</taxon>
        <taxon>Mammalia</taxon>
        <taxon>Eutheria</taxon>
        <taxon>Euarchontoglires</taxon>
        <taxon>Primates</taxon>
        <taxon>Haplorrhini</taxon>
        <taxon>Catarrhini</taxon>
        <taxon>Hominidae</taxon>
        <taxon>Pongo</taxon>
    </lineage>
</organism>
<name>ARL3_PONAB</name>